<comment type="function">
    <text evidence="2 4">Component of the cytochrome c oxidase, the last enzyme in the mitochondrial electron transport chain which drives oxidative phosphorylation (PubMed:38575788). The respiratory chain contains 3 multisubunit complexes succinate dehydrogenase (complex II, CII), ubiquinol-cytochrome c oxidoreductase (cytochrome b-c1 complex, complex III, CIII) and cytochrome c oxidase (complex IV, CIV), that cooperate to transfer electrons derived from NADH and succinate to molecular oxygen, creating an electrochemical gradient over the inner membrane that drives transmembrane transport and the ATP synthase (PubMed:38575788). Cytochrome c oxidase is the component of the respiratory chain that catalyzes the reduction of oxygen to water (By similarity). Electrons originating from reduced cytochrome c in the intermembrane space (IMS) are transferred via the dinuclear copper A center (CU(A)) of subunit 2 and heme A of subunit 1 to the active site in subunit 1, a binuclear center (BNC) formed by heme A3 and copper B (CU(B)) (By similarity). The BNC reduces molecular oxygen to 2 water molecules using 4 electrons from cytochrome c in the IMS and 4 protons from the mitochondrial matrix (By similarity).</text>
</comment>
<comment type="pathway">
    <text evidence="4">Energy metabolism; oxidative phosphorylation.</text>
</comment>
<comment type="subunit">
    <text evidence="3 4">Component of the cytochrome c oxidase (complex IV, CIV), a multisubunit enzyme composed of 14 subunits (PubMed:38575788). The complex is composed of a catalytic core of 3 subunits MT-CO1, MT-CO2 and MT-CO3, encoded in the mitochondrial DNA, and 11 supernumerary subunits COX4I, COX5A, COX5B, COX6A, COX6B, COX6C, COX7A, COX7B, COX7C, COX8 and NDUFA4, which are encoded in the nuclear genome (PubMed:38575788). The complex exists as a monomer or a dimer and forms supercomplexes (SCs) in the inner mitochondrial membrane with NADH-ubiquinone oxidoreductase (complex I, CI) and ubiquinol-cytochrome c oxidoreductase (cytochrome b-c1 complex, complex III, CIII), resulting in different assemblies (supercomplex SCI(1)III(2)IV(1) and megacomplex MCI(2)III(2)IV(2)) (PubMed:38575788). Interacts with PET100 (By similarity).</text>
</comment>
<comment type="subcellular location">
    <subcellularLocation>
        <location evidence="4">Mitochondrion inner membrane</location>
        <topology evidence="3">Single-pass membrane protein</topology>
    </subcellularLocation>
</comment>
<comment type="similarity">
    <text evidence="5">Belongs to the cytochrome c oxidase VIIa family.</text>
</comment>
<accession>P48771</accession>
<accession>O54969</accession>
<accession>Q545J7</accession>
<protein>
    <recommendedName>
        <fullName>Cytochrome c oxidase subunit 7A2, mitochondrial</fullName>
    </recommendedName>
    <alternativeName>
        <fullName>Cytochrome c oxidase subunit VIIa-liver/heart</fullName>
        <shortName>Cytochrome c oxidase subunit VIIa-L</shortName>
    </alternativeName>
</protein>
<reference key="1">
    <citation type="journal article" date="1991" name="Nucleic Acids Res.">
        <title>Isolation of a large number of novel mammalian genes by a differential cDNA library screening strategy.</title>
        <authorList>
            <person name="Hoeoeg C."/>
        </authorList>
    </citation>
    <scope>NUCLEOTIDE SEQUENCE [MRNA]</scope>
    <source>
        <strain>BALB/cJ</strain>
        <tissue>Testis</tissue>
    </source>
</reference>
<reference key="2">
    <citation type="submission" date="1997-12" db="EMBL/GenBank/DDBJ databases">
        <title>Mouse liver cytochrome c oxidase subunit VIIa cDNA.</title>
        <authorList>
            <person name="Jaradat S.A."/>
            <person name="Grossman L.I."/>
        </authorList>
    </citation>
    <scope>NUCLEOTIDE SEQUENCE [MRNA]</scope>
    <source>
        <tissue>Liver</tissue>
    </source>
</reference>
<reference key="3">
    <citation type="journal article" date="2005" name="Science">
        <title>The transcriptional landscape of the mammalian genome.</title>
        <authorList>
            <person name="Carninci P."/>
            <person name="Kasukawa T."/>
            <person name="Katayama S."/>
            <person name="Gough J."/>
            <person name="Frith M.C."/>
            <person name="Maeda N."/>
            <person name="Oyama R."/>
            <person name="Ravasi T."/>
            <person name="Lenhard B."/>
            <person name="Wells C."/>
            <person name="Kodzius R."/>
            <person name="Shimokawa K."/>
            <person name="Bajic V.B."/>
            <person name="Brenner S.E."/>
            <person name="Batalov S."/>
            <person name="Forrest A.R."/>
            <person name="Zavolan M."/>
            <person name="Davis M.J."/>
            <person name="Wilming L.G."/>
            <person name="Aidinis V."/>
            <person name="Allen J.E."/>
            <person name="Ambesi-Impiombato A."/>
            <person name="Apweiler R."/>
            <person name="Aturaliya R.N."/>
            <person name="Bailey T.L."/>
            <person name="Bansal M."/>
            <person name="Baxter L."/>
            <person name="Beisel K.W."/>
            <person name="Bersano T."/>
            <person name="Bono H."/>
            <person name="Chalk A.M."/>
            <person name="Chiu K.P."/>
            <person name="Choudhary V."/>
            <person name="Christoffels A."/>
            <person name="Clutterbuck D.R."/>
            <person name="Crowe M.L."/>
            <person name="Dalla E."/>
            <person name="Dalrymple B.P."/>
            <person name="de Bono B."/>
            <person name="Della Gatta G."/>
            <person name="di Bernardo D."/>
            <person name="Down T."/>
            <person name="Engstrom P."/>
            <person name="Fagiolini M."/>
            <person name="Faulkner G."/>
            <person name="Fletcher C.F."/>
            <person name="Fukushima T."/>
            <person name="Furuno M."/>
            <person name="Futaki S."/>
            <person name="Gariboldi M."/>
            <person name="Georgii-Hemming P."/>
            <person name="Gingeras T.R."/>
            <person name="Gojobori T."/>
            <person name="Green R.E."/>
            <person name="Gustincich S."/>
            <person name="Harbers M."/>
            <person name="Hayashi Y."/>
            <person name="Hensch T.K."/>
            <person name="Hirokawa N."/>
            <person name="Hill D."/>
            <person name="Huminiecki L."/>
            <person name="Iacono M."/>
            <person name="Ikeo K."/>
            <person name="Iwama A."/>
            <person name="Ishikawa T."/>
            <person name="Jakt M."/>
            <person name="Kanapin A."/>
            <person name="Katoh M."/>
            <person name="Kawasawa Y."/>
            <person name="Kelso J."/>
            <person name="Kitamura H."/>
            <person name="Kitano H."/>
            <person name="Kollias G."/>
            <person name="Krishnan S.P."/>
            <person name="Kruger A."/>
            <person name="Kummerfeld S.K."/>
            <person name="Kurochkin I.V."/>
            <person name="Lareau L.F."/>
            <person name="Lazarevic D."/>
            <person name="Lipovich L."/>
            <person name="Liu J."/>
            <person name="Liuni S."/>
            <person name="McWilliam S."/>
            <person name="Madan Babu M."/>
            <person name="Madera M."/>
            <person name="Marchionni L."/>
            <person name="Matsuda H."/>
            <person name="Matsuzawa S."/>
            <person name="Miki H."/>
            <person name="Mignone F."/>
            <person name="Miyake S."/>
            <person name="Morris K."/>
            <person name="Mottagui-Tabar S."/>
            <person name="Mulder N."/>
            <person name="Nakano N."/>
            <person name="Nakauchi H."/>
            <person name="Ng P."/>
            <person name="Nilsson R."/>
            <person name="Nishiguchi S."/>
            <person name="Nishikawa S."/>
            <person name="Nori F."/>
            <person name="Ohara O."/>
            <person name="Okazaki Y."/>
            <person name="Orlando V."/>
            <person name="Pang K.C."/>
            <person name="Pavan W.J."/>
            <person name="Pavesi G."/>
            <person name="Pesole G."/>
            <person name="Petrovsky N."/>
            <person name="Piazza S."/>
            <person name="Reed J."/>
            <person name="Reid J.F."/>
            <person name="Ring B.Z."/>
            <person name="Ringwald M."/>
            <person name="Rost B."/>
            <person name="Ruan Y."/>
            <person name="Salzberg S.L."/>
            <person name="Sandelin A."/>
            <person name="Schneider C."/>
            <person name="Schoenbach C."/>
            <person name="Sekiguchi K."/>
            <person name="Semple C.A."/>
            <person name="Seno S."/>
            <person name="Sessa L."/>
            <person name="Sheng Y."/>
            <person name="Shibata Y."/>
            <person name="Shimada H."/>
            <person name="Shimada K."/>
            <person name="Silva D."/>
            <person name="Sinclair B."/>
            <person name="Sperling S."/>
            <person name="Stupka E."/>
            <person name="Sugiura K."/>
            <person name="Sultana R."/>
            <person name="Takenaka Y."/>
            <person name="Taki K."/>
            <person name="Tammoja K."/>
            <person name="Tan S.L."/>
            <person name="Tang S."/>
            <person name="Taylor M.S."/>
            <person name="Tegner J."/>
            <person name="Teichmann S.A."/>
            <person name="Ueda H.R."/>
            <person name="van Nimwegen E."/>
            <person name="Verardo R."/>
            <person name="Wei C.L."/>
            <person name="Yagi K."/>
            <person name="Yamanishi H."/>
            <person name="Zabarovsky E."/>
            <person name="Zhu S."/>
            <person name="Zimmer A."/>
            <person name="Hide W."/>
            <person name="Bult C."/>
            <person name="Grimmond S.M."/>
            <person name="Teasdale R.D."/>
            <person name="Liu E.T."/>
            <person name="Brusic V."/>
            <person name="Quackenbush J."/>
            <person name="Wahlestedt C."/>
            <person name="Mattick J.S."/>
            <person name="Hume D.A."/>
            <person name="Kai C."/>
            <person name="Sasaki D."/>
            <person name="Tomaru Y."/>
            <person name="Fukuda S."/>
            <person name="Kanamori-Katayama M."/>
            <person name="Suzuki M."/>
            <person name="Aoki J."/>
            <person name="Arakawa T."/>
            <person name="Iida J."/>
            <person name="Imamura K."/>
            <person name="Itoh M."/>
            <person name="Kato T."/>
            <person name="Kawaji H."/>
            <person name="Kawagashira N."/>
            <person name="Kawashima T."/>
            <person name="Kojima M."/>
            <person name="Kondo S."/>
            <person name="Konno H."/>
            <person name="Nakano K."/>
            <person name="Ninomiya N."/>
            <person name="Nishio T."/>
            <person name="Okada M."/>
            <person name="Plessy C."/>
            <person name="Shibata K."/>
            <person name="Shiraki T."/>
            <person name="Suzuki S."/>
            <person name="Tagami M."/>
            <person name="Waki K."/>
            <person name="Watahiki A."/>
            <person name="Okamura-Oho Y."/>
            <person name="Suzuki H."/>
            <person name="Kawai J."/>
            <person name="Hayashizaki Y."/>
        </authorList>
    </citation>
    <scope>NUCLEOTIDE SEQUENCE [LARGE SCALE MRNA]</scope>
    <source>
        <strain>C57BL/6J</strain>
        <tissue>Bone marrow</tissue>
        <tissue>Pancreas</tissue>
    </source>
</reference>
<reference key="4">
    <citation type="journal article" date="2004" name="Genome Res.">
        <title>The status, quality, and expansion of the NIH full-length cDNA project: the Mammalian Gene Collection (MGC).</title>
        <authorList>
            <consortium name="The MGC Project Team"/>
        </authorList>
    </citation>
    <scope>NUCLEOTIDE SEQUENCE [LARGE SCALE MRNA]</scope>
    <source>
        <strain>FVB/N</strain>
        <tissue>Colon</tissue>
    </source>
</reference>
<reference key="5">
    <citation type="submission" date="2007-04" db="UniProtKB">
        <authorList>
            <person name="Lubec G."/>
            <person name="Kang S.U."/>
        </authorList>
    </citation>
    <scope>PROTEIN SEQUENCE OF 34-56</scope>
    <scope>IDENTIFICATION BY MASS SPECTROMETRY</scope>
    <source>
        <strain>C57BL/6J</strain>
        <tissue>Brain</tissue>
    </source>
</reference>
<reference key="6">
    <citation type="journal article" date="2010" name="Cell">
        <title>A tissue-specific atlas of mouse protein phosphorylation and expression.</title>
        <authorList>
            <person name="Huttlin E.L."/>
            <person name="Jedrychowski M.P."/>
            <person name="Elias J.E."/>
            <person name="Goswami T."/>
            <person name="Rad R."/>
            <person name="Beausoleil S.A."/>
            <person name="Villen J."/>
            <person name="Haas W."/>
            <person name="Sowa M.E."/>
            <person name="Gygi S.P."/>
        </authorList>
    </citation>
    <scope>IDENTIFICATION BY MASS SPECTROMETRY [LARGE SCALE ANALYSIS]</scope>
    <source>
        <tissue>Brain</tissue>
        <tissue>Brown adipose tissue</tissue>
        <tissue>Heart</tissue>
        <tissue>Kidney</tissue>
        <tissue>Liver</tissue>
        <tissue>Lung</tissue>
        <tissue>Pancreas</tissue>
        <tissue>Spleen</tissue>
        <tissue>Testis</tissue>
    </source>
</reference>
<reference key="7">
    <citation type="journal article" date="2013" name="Proc. Natl. Acad. Sci. U.S.A.">
        <title>Label-free quantitative proteomics of the lysine acetylome in mitochondria identifies substrates of SIRT3 in metabolic pathways.</title>
        <authorList>
            <person name="Rardin M.J."/>
            <person name="Newman J.C."/>
            <person name="Held J.M."/>
            <person name="Cusack M.P."/>
            <person name="Sorensen D.J."/>
            <person name="Li B."/>
            <person name="Schilling B."/>
            <person name="Mooney S.D."/>
            <person name="Kahn C.R."/>
            <person name="Verdin E."/>
            <person name="Gibson B.W."/>
        </authorList>
    </citation>
    <scope>ACETYLATION [LARGE SCALE ANALYSIS] AT LYS-33</scope>
    <scope>IDENTIFICATION BY MASS SPECTROMETRY [LARGE SCALE ANALYSIS]</scope>
    <source>
        <tissue>Liver</tissue>
    </source>
</reference>
<reference evidence="6" key="8">
    <citation type="journal article" date="2024" name="Nat. Struct. Mol. Biol.">
        <title>SCAF1 drives the compositional diversity of mammalian respirasomes.</title>
        <authorList>
            <person name="Vercellino I."/>
            <person name="Sazanov L.A."/>
        </authorList>
    </citation>
    <scope>STRUCTURE BY ELECTRON MICROSCOPY (3.60 ANGSTROMS) IN COMPLEX WITH MITOCHONDRIAL RESPIRATORY SUPERCOMPLEX</scope>
    <scope>FUNCTION</scope>
    <scope>SUBCELLULAR LOCATION</scope>
    <scope>SUBUNIT</scope>
</reference>
<proteinExistence type="evidence at protein level"/>
<name>CX7A2_MOUSE</name>
<feature type="transit peptide" description="Mitochondrion" evidence="3">
    <location>
        <begin position="1"/>
        <end position="23"/>
    </location>
</feature>
<feature type="chain" id="PRO_0000006146" description="Cytochrome c oxidase subunit 7A2, mitochondrial">
    <location>
        <begin position="24"/>
        <end position="83"/>
    </location>
</feature>
<feature type="topological domain" description="Mitochondrial matrix" evidence="3">
    <location>
        <begin position="24"/>
        <end position="48"/>
    </location>
</feature>
<feature type="transmembrane region" description="Helical" evidence="1">
    <location>
        <begin position="49"/>
        <end position="77"/>
    </location>
</feature>
<feature type="topological domain" description="Mitochondrial intermembrane" evidence="3">
    <location>
        <begin position="78"/>
        <end position="83"/>
    </location>
</feature>
<feature type="modified residue" description="N6-acetyllysine" evidence="7">
    <location>
        <position position="33"/>
    </location>
</feature>
<feature type="sequence conflict" description="In Ref. 1; CAA41396." evidence="5" ref="1">
    <original>Q</original>
    <variation>K</variation>
    <location>
        <position position="10"/>
    </location>
</feature>
<feature type="sequence conflict" description="In Ref. 1; CAA41396." evidence="5" ref="1">
    <original>D</original>
    <variation>N</variation>
    <location>
        <position position="51"/>
    </location>
</feature>
<organism>
    <name type="scientific">Mus musculus</name>
    <name type="common">Mouse</name>
    <dbReference type="NCBI Taxonomy" id="10090"/>
    <lineage>
        <taxon>Eukaryota</taxon>
        <taxon>Metazoa</taxon>
        <taxon>Chordata</taxon>
        <taxon>Craniata</taxon>
        <taxon>Vertebrata</taxon>
        <taxon>Euteleostomi</taxon>
        <taxon>Mammalia</taxon>
        <taxon>Eutheria</taxon>
        <taxon>Euarchontoglires</taxon>
        <taxon>Glires</taxon>
        <taxon>Rodentia</taxon>
        <taxon>Myomorpha</taxon>
        <taxon>Muroidea</taxon>
        <taxon>Muridae</taxon>
        <taxon>Murinae</taxon>
        <taxon>Mus</taxon>
        <taxon>Mus</taxon>
    </lineage>
</organism>
<sequence>MLRNLLALRQIAQRTISTTSRRHFENKVPEKQKLFQEDNGMPVHLKGGASDALLYRATMALTLGGTAYAIYLLAMAAFPKKQN</sequence>
<dbReference type="EMBL" id="X58486">
    <property type="protein sequence ID" value="CAA41396.1"/>
    <property type="molecule type" value="mRNA"/>
</dbReference>
<dbReference type="EMBL" id="AF037371">
    <property type="protein sequence ID" value="AAB92615.1"/>
    <property type="molecule type" value="mRNA"/>
</dbReference>
<dbReference type="EMBL" id="AK007875">
    <property type="protein sequence ID" value="BAB25324.1"/>
    <property type="molecule type" value="mRNA"/>
</dbReference>
<dbReference type="EMBL" id="AK011269">
    <property type="protein sequence ID" value="BAB27507.1"/>
    <property type="molecule type" value="mRNA"/>
</dbReference>
<dbReference type="EMBL" id="AK019210">
    <property type="protein sequence ID" value="BAB31602.1"/>
    <property type="molecule type" value="mRNA"/>
</dbReference>
<dbReference type="EMBL" id="AK153173">
    <property type="protein sequence ID" value="BAE31778.1"/>
    <property type="molecule type" value="mRNA"/>
</dbReference>
<dbReference type="EMBL" id="BC010979">
    <property type="protein sequence ID" value="AAH10979.1"/>
    <property type="molecule type" value="mRNA"/>
</dbReference>
<dbReference type="CCDS" id="CCDS23366.1"/>
<dbReference type="PIR" id="I48286">
    <property type="entry name" value="I48286"/>
</dbReference>
<dbReference type="RefSeq" id="NP_034075.2">
    <property type="nucleotide sequence ID" value="NM_009945.3"/>
</dbReference>
<dbReference type="PDB" id="8PW5">
    <property type="method" value="EM"/>
    <property type="resolution" value="3.60 A"/>
    <property type="chains" value="w=1-83"/>
</dbReference>
<dbReference type="PDB" id="8PW6">
    <property type="method" value="EM"/>
    <property type="resolution" value="3.30 A"/>
    <property type="chains" value="w=1-83"/>
</dbReference>
<dbReference type="PDB" id="8PW7">
    <property type="method" value="EM"/>
    <property type="resolution" value="3.50 A"/>
    <property type="chains" value="w=1-83"/>
</dbReference>
<dbReference type="PDBsum" id="8PW5"/>
<dbReference type="PDBsum" id="8PW6"/>
<dbReference type="PDBsum" id="8PW7"/>
<dbReference type="EMDB" id="EMD-17989"/>
<dbReference type="EMDB" id="EMD-17990"/>
<dbReference type="EMDB" id="EMD-17991"/>
<dbReference type="SMR" id="P48771"/>
<dbReference type="BioGRID" id="198847">
    <property type="interactions" value="30"/>
</dbReference>
<dbReference type="CORUM" id="P48771"/>
<dbReference type="FunCoup" id="P48771">
    <property type="interactions" value="796"/>
</dbReference>
<dbReference type="IntAct" id="P48771">
    <property type="interactions" value="1"/>
</dbReference>
<dbReference type="STRING" id="10090.ENSMUSP00000034881"/>
<dbReference type="GlyGen" id="P48771">
    <property type="glycosylation" value="1 site, 1 O-linked glycan (1 site)"/>
</dbReference>
<dbReference type="iPTMnet" id="P48771"/>
<dbReference type="PhosphoSitePlus" id="P48771"/>
<dbReference type="SwissPalm" id="P48771"/>
<dbReference type="jPOST" id="P48771"/>
<dbReference type="PaxDb" id="10090-ENSMUSP00000034881"/>
<dbReference type="PeptideAtlas" id="P48771"/>
<dbReference type="ProteomicsDB" id="285404"/>
<dbReference type="Pumba" id="P48771"/>
<dbReference type="TopDownProteomics" id="P48771"/>
<dbReference type="Antibodypedia" id="31505">
    <property type="antibodies" value="174 antibodies from 18 providers"/>
</dbReference>
<dbReference type="DNASU" id="12866"/>
<dbReference type="Ensembl" id="ENSMUST00000034881.8">
    <property type="protein sequence ID" value="ENSMUSP00000034881.7"/>
    <property type="gene ID" value="ENSMUSG00000032330.8"/>
</dbReference>
<dbReference type="GeneID" id="12866"/>
<dbReference type="KEGG" id="mmu:12866"/>
<dbReference type="UCSC" id="uc009quv.1">
    <property type="organism name" value="mouse"/>
</dbReference>
<dbReference type="AGR" id="MGI:1316715"/>
<dbReference type="CTD" id="1347"/>
<dbReference type="MGI" id="MGI:1316715">
    <property type="gene designation" value="Cox7a2"/>
</dbReference>
<dbReference type="VEuPathDB" id="HostDB:ENSMUSG00000032330"/>
<dbReference type="eggNOG" id="ENOG502S4DT">
    <property type="taxonomic scope" value="Eukaryota"/>
</dbReference>
<dbReference type="GeneTree" id="ENSGT00940000154550"/>
<dbReference type="HOGENOM" id="CLU_173437_0_0_1"/>
<dbReference type="InParanoid" id="P48771"/>
<dbReference type="OMA" id="WAVTAKM"/>
<dbReference type="OrthoDB" id="5966508at2759"/>
<dbReference type="PhylomeDB" id="P48771"/>
<dbReference type="TreeFam" id="TF105067"/>
<dbReference type="Reactome" id="R-MMU-5628897">
    <property type="pathway name" value="TP53 Regulates Metabolic Genes"/>
</dbReference>
<dbReference type="Reactome" id="R-MMU-611105">
    <property type="pathway name" value="Respiratory electron transport"/>
</dbReference>
<dbReference type="Reactome" id="R-MMU-9707564">
    <property type="pathway name" value="Cytoprotection by HMOX1"/>
</dbReference>
<dbReference type="Reactome" id="R-MMU-9864848">
    <property type="pathway name" value="Complex IV assembly"/>
</dbReference>
<dbReference type="UniPathway" id="UPA00705"/>
<dbReference type="BioGRID-ORCS" id="12866">
    <property type="hits" value="2 hits in 76 CRISPR screens"/>
</dbReference>
<dbReference type="ChiTaRS" id="Cox7a2">
    <property type="organism name" value="mouse"/>
</dbReference>
<dbReference type="PRO" id="PR:P48771"/>
<dbReference type="Proteomes" id="UP000000589">
    <property type="component" value="Chromosome 9"/>
</dbReference>
<dbReference type="RNAct" id="P48771">
    <property type="molecule type" value="protein"/>
</dbReference>
<dbReference type="Bgee" id="ENSMUSG00000032330">
    <property type="expression patterns" value="Expressed in floor plate of midbrain and 263 other cell types or tissues"/>
</dbReference>
<dbReference type="GO" id="GO:0005743">
    <property type="term" value="C:mitochondrial inner membrane"/>
    <property type="evidence" value="ECO:0000314"/>
    <property type="project" value="UniProtKB"/>
</dbReference>
<dbReference type="GO" id="GO:0005739">
    <property type="term" value="C:mitochondrion"/>
    <property type="evidence" value="ECO:0007005"/>
    <property type="project" value="MGI"/>
</dbReference>
<dbReference type="GO" id="GO:0045277">
    <property type="term" value="C:respiratory chain complex IV"/>
    <property type="evidence" value="ECO:0000314"/>
    <property type="project" value="UniProtKB"/>
</dbReference>
<dbReference type="GO" id="GO:0016491">
    <property type="term" value="F:oxidoreductase activity"/>
    <property type="evidence" value="ECO:0007669"/>
    <property type="project" value="UniProtKB-KW"/>
</dbReference>
<dbReference type="GO" id="GO:0006123">
    <property type="term" value="P:mitochondrial electron transport, cytochrome c to oxygen"/>
    <property type="evidence" value="ECO:0007669"/>
    <property type="project" value="InterPro"/>
</dbReference>
<dbReference type="CDD" id="cd00928">
    <property type="entry name" value="Cyt_c_Oxidase_VIIa"/>
    <property type="match status" value="1"/>
</dbReference>
<dbReference type="FunFam" id="4.10.91.10:FF:000001">
    <property type="entry name" value="Cytochrome c oxidase subunit 7A1, mitochondrial"/>
    <property type="match status" value="1"/>
</dbReference>
<dbReference type="Gene3D" id="4.10.91.10">
    <property type="entry name" value="Cytochrome c oxidase, subunit VIIa"/>
    <property type="match status" value="1"/>
</dbReference>
<dbReference type="InterPro" id="IPR039297">
    <property type="entry name" value="COX7a"/>
</dbReference>
<dbReference type="InterPro" id="IPR036539">
    <property type="entry name" value="Cyt_c_oxidase_su7a_sf"/>
</dbReference>
<dbReference type="InterPro" id="IPR003177">
    <property type="entry name" value="Cytc_oxidase_su7a_met"/>
</dbReference>
<dbReference type="PANTHER" id="PTHR10510">
    <property type="entry name" value="CYTOCHROME C OXIDASE POLYPEPTIDE 7A"/>
    <property type="match status" value="1"/>
</dbReference>
<dbReference type="PANTHER" id="PTHR10510:SF15">
    <property type="entry name" value="CYTOCHROME C OXIDASE SUBUNIT 7A2, MITOCHONDRIAL"/>
    <property type="match status" value="1"/>
</dbReference>
<dbReference type="Pfam" id="PF02238">
    <property type="entry name" value="COX7a"/>
    <property type="match status" value="1"/>
</dbReference>
<dbReference type="SUPFAM" id="SSF81419">
    <property type="entry name" value="Mitochondrial cytochrome c oxidase subunit VIIa"/>
    <property type="match status" value="1"/>
</dbReference>
<keyword id="KW-0002">3D-structure</keyword>
<keyword id="KW-0007">Acetylation</keyword>
<keyword id="KW-0903">Direct protein sequencing</keyword>
<keyword id="KW-0472">Membrane</keyword>
<keyword id="KW-0496">Mitochondrion</keyword>
<keyword id="KW-0999">Mitochondrion inner membrane</keyword>
<keyword id="KW-0560">Oxidoreductase</keyword>
<keyword id="KW-1185">Reference proteome</keyword>
<keyword id="KW-0809">Transit peptide</keyword>
<keyword id="KW-0812">Transmembrane</keyword>
<keyword id="KW-1133">Transmembrane helix</keyword>
<evidence type="ECO:0000250" key="1">
    <source>
        <dbReference type="UniProtKB" id="P07470"/>
    </source>
</evidence>
<evidence type="ECO:0000250" key="2">
    <source>
        <dbReference type="UniProtKB" id="P10174"/>
    </source>
</evidence>
<evidence type="ECO:0000250" key="3">
    <source>
        <dbReference type="UniProtKB" id="P14406"/>
    </source>
</evidence>
<evidence type="ECO:0000269" key="4">
    <source>
    </source>
</evidence>
<evidence type="ECO:0000305" key="5"/>
<evidence type="ECO:0007744" key="6">
    <source>
        <dbReference type="PDB" id="8PW5"/>
    </source>
</evidence>
<evidence type="ECO:0007744" key="7">
    <source>
    </source>
</evidence>
<gene>
    <name type="primary">Cox7a2</name>
    <name type="synonym">Cox7a3</name>
    <name type="synonym">Cox7al</name>
</gene>